<comment type="function">
    <text evidence="1">Key enzyme in the regulation of glycerol uptake and metabolism. Catalyzes the phosphorylation of glycerol to yield sn-glycerol 3-phosphate.</text>
</comment>
<comment type="catalytic activity">
    <reaction evidence="1">
        <text>glycerol + ATP = sn-glycerol 3-phosphate + ADP + H(+)</text>
        <dbReference type="Rhea" id="RHEA:21644"/>
        <dbReference type="ChEBI" id="CHEBI:15378"/>
        <dbReference type="ChEBI" id="CHEBI:17754"/>
        <dbReference type="ChEBI" id="CHEBI:30616"/>
        <dbReference type="ChEBI" id="CHEBI:57597"/>
        <dbReference type="ChEBI" id="CHEBI:456216"/>
        <dbReference type="EC" id="2.7.1.30"/>
    </reaction>
</comment>
<comment type="activity regulation">
    <text evidence="1">Activated by phosphorylation and inhibited by fructose 1,6-bisphosphate (FBP).</text>
</comment>
<comment type="pathway">
    <text evidence="1">Polyol metabolism; glycerol degradation via glycerol kinase pathway; sn-glycerol 3-phosphate from glycerol: step 1/1.</text>
</comment>
<comment type="subunit">
    <text evidence="1">Homotetramer and homodimer (in equilibrium).</text>
</comment>
<comment type="PTM">
    <text evidence="1">The phosphoenolpyruvate-dependent sugar phosphotransferase system (PTS), including enzyme I, and histidine-containing protein (HPr) are required for the phosphorylation, which leads to the activation of the enzyme.</text>
</comment>
<comment type="similarity">
    <text evidence="1">Belongs to the FGGY kinase family.</text>
</comment>
<accession>A9VI58</accession>
<proteinExistence type="inferred from homology"/>
<reference key="1">
    <citation type="journal article" date="2008" name="Chem. Biol. Interact.">
        <title>Extending the Bacillus cereus group genomics to putative food-borne pathogens of different toxicity.</title>
        <authorList>
            <person name="Lapidus A."/>
            <person name="Goltsman E."/>
            <person name="Auger S."/>
            <person name="Galleron N."/>
            <person name="Segurens B."/>
            <person name="Dossat C."/>
            <person name="Land M.L."/>
            <person name="Broussolle V."/>
            <person name="Brillard J."/>
            <person name="Guinebretiere M.-H."/>
            <person name="Sanchis V."/>
            <person name="Nguen-the C."/>
            <person name="Lereclus D."/>
            <person name="Richardson P."/>
            <person name="Wincker P."/>
            <person name="Weissenbach J."/>
            <person name="Ehrlich S.D."/>
            <person name="Sorokin A."/>
        </authorList>
    </citation>
    <scope>NUCLEOTIDE SEQUENCE [LARGE SCALE GENOMIC DNA]</scope>
    <source>
        <strain>KBAB4</strain>
    </source>
</reference>
<protein>
    <recommendedName>
        <fullName evidence="1">Glycerol kinase</fullName>
        <ecNumber evidence="1">2.7.1.30</ecNumber>
    </recommendedName>
    <alternativeName>
        <fullName evidence="1">ATP:glycerol 3-phosphotransferase</fullName>
    </alternativeName>
    <alternativeName>
        <fullName evidence="1">Glycerokinase</fullName>
        <shortName evidence="1">GK</shortName>
    </alternativeName>
</protein>
<keyword id="KW-0067">ATP-binding</keyword>
<keyword id="KW-0319">Glycerol metabolism</keyword>
<keyword id="KW-0418">Kinase</keyword>
<keyword id="KW-0547">Nucleotide-binding</keyword>
<keyword id="KW-0597">Phosphoprotein</keyword>
<keyword id="KW-0808">Transferase</keyword>
<evidence type="ECO:0000255" key="1">
    <source>
        <dbReference type="HAMAP-Rule" id="MF_00186"/>
    </source>
</evidence>
<sequence length="496" mass="55084">MKKYILSLDQGTTSSRAILFNKEGKIVHSAQKEFTQHFPKPGWVEHNAQEIWGSILAVIATCLSEADVKPEQIAGIGITNQRETAVVWDKTTGKPIYNAIVWQSRQTVEICDELKEKGYSEMVREKTGLLIDAYFSGTKVKWILDNVEGAREKAENGELLFGTIDTWLVWKLSGGKAHITDYSNASRTLMFNIHDLQWDDELLDMLTVPKSMLPEVRQSSEIYGETIDYHFFGQNVPIAGVAGDQQAALFGQACFGEGMAKNTYGTGCFMLMNTGEKAVASEHGLLTTIAWGLDGKVNYALEGSIFVAGSAIQWLRDGLRMFKDASESEVYASRVESTEGVYIVPAFVGLGTPYWDSEVRGAMFGVTRGTTKEHFIRATLESLAYQTKDVLCAMEADSGIELNTLRVDGGAVKNNFLMKFQSDILDVPVERPVINETTALGAAYLAGLAVGYWKNQDEIKAQWHMDKRFEPTMEAETSEELYAGWKKAIEATKAFK</sequence>
<dbReference type="EC" id="2.7.1.30" evidence="1"/>
<dbReference type="EMBL" id="CP000903">
    <property type="protein sequence ID" value="ABY42201.1"/>
    <property type="molecule type" value="Genomic_DNA"/>
</dbReference>
<dbReference type="RefSeq" id="WP_002011107.1">
    <property type="nucleotide sequence ID" value="NC_010184.1"/>
</dbReference>
<dbReference type="SMR" id="A9VI58"/>
<dbReference type="GeneID" id="66263918"/>
<dbReference type="KEGG" id="bwe:BcerKBAB4_0948"/>
<dbReference type="eggNOG" id="COG0554">
    <property type="taxonomic scope" value="Bacteria"/>
</dbReference>
<dbReference type="HOGENOM" id="CLU_009281_2_3_9"/>
<dbReference type="UniPathway" id="UPA00618">
    <property type="reaction ID" value="UER00672"/>
</dbReference>
<dbReference type="Proteomes" id="UP000002154">
    <property type="component" value="Chromosome"/>
</dbReference>
<dbReference type="GO" id="GO:0005829">
    <property type="term" value="C:cytosol"/>
    <property type="evidence" value="ECO:0007669"/>
    <property type="project" value="TreeGrafter"/>
</dbReference>
<dbReference type="GO" id="GO:0005524">
    <property type="term" value="F:ATP binding"/>
    <property type="evidence" value="ECO:0007669"/>
    <property type="project" value="UniProtKB-UniRule"/>
</dbReference>
<dbReference type="GO" id="GO:0004370">
    <property type="term" value="F:glycerol kinase activity"/>
    <property type="evidence" value="ECO:0000250"/>
    <property type="project" value="UniProtKB"/>
</dbReference>
<dbReference type="GO" id="GO:0019563">
    <property type="term" value="P:glycerol catabolic process"/>
    <property type="evidence" value="ECO:0007669"/>
    <property type="project" value="UniProtKB-UniRule"/>
</dbReference>
<dbReference type="GO" id="GO:0006071">
    <property type="term" value="P:glycerol metabolic process"/>
    <property type="evidence" value="ECO:0000250"/>
    <property type="project" value="UniProtKB"/>
</dbReference>
<dbReference type="GO" id="GO:0006072">
    <property type="term" value="P:glycerol-3-phosphate metabolic process"/>
    <property type="evidence" value="ECO:0007669"/>
    <property type="project" value="InterPro"/>
</dbReference>
<dbReference type="CDD" id="cd07786">
    <property type="entry name" value="FGGY_EcGK_like"/>
    <property type="match status" value="1"/>
</dbReference>
<dbReference type="FunFam" id="3.30.420.40:FF:000007">
    <property type="entry name" value="Glycerol kinase"/>
    <property type="match status" value="1"/>
</dbReference>
<dbReference type="FunFam" id="3.30.420.40:FF:000008">
    <property type="entry name" value="Glycerol kinase"/>
    <property type="match status" value="1"/>
</dbReference>
<dbReference type="Gene3D" id="3.30.420.40">
    <property type="match status" value="2"/>
</dbReference>
<dbReference type="HAMAP" id="MF_00186">
    <property type="entry name" value="Glycerol_kin"/>
    <property type="match status" value="1"/>
</dbReference>
<dbReference type="InterPro" id="IPR043129">
    <property type="entry name" value="ATPase_NBD"/>
</dbReference>
<dbReference type="InterPro" id="IPR000577">
    <property type="entry name" value="Carb_kinase_FGGY"/>
</dbReference>
<dbReference type="InterPro" id="IPR018483">
    <property type="entry name" value="Carb_kinase_FGGY_CS"/>
</dbReference>
<dbReference type="InterPro" id="IPR018485">
    <property type="entry name" value="FGGY_C"/>
</dbReference>
<dbReference type="InterPro" id="IPR018484">
    <property type="entry name" value="FGGY_N"/>
</dbReference>
<dbReference type="InterPro" id="IPR005999">
    <property type="entry name" value="Glycerol_kin"/>
</dbReference>
<dbReference type="NCBIfam" id="TIGR01311">
    <property type="entry name" value="glycerol_kin"/>
    <property type="match status" value="1"/>
</dbReference>
<dbReference type="NCBIfam" id="NF000756">
    <property type="entry name" value="PRK00047.1"/>
    <property type="match status" value="1"/>
</dbReference>
<dbReference type="PANTHER" id="PTHR10196:SF69">
    <property type="entry name" value="GLYCEROL KINASE"/>
    <property type="match status" value="1"/>
</dbReference>
<dbReference type="PANTHER" id="PTHR10196">
    <property type="entry name" value="SUGAR KINASE"/>
    <property type="match status" value="1"/>
</dbReference>
<dbReference type="Pfam" id="PF02782">
    <property type="entry name" value="FGGY_C"/>
    <property type="match status" value="1"/>
</dbReference>
<dbReference type="Pfam" id="PF00370">
    <property type="entry name" value="FGGY_N"/>
    <property type="match status" value="1"/>
</dbReference>
<dbReference type="PIRSF" id="PIRSF000538">
    <property type="entry name" value="GlpK"/>
    <property type="match status" value="1"/>
</dbReference>
<dbReference type="SUPFAM" id="SSF53067">
    <property type="entry name" value="Actin-like ATPase domain"/>
    <property type="match status" value="2"/>
</dbReference>
<dbReference type="PROSITE" id="PS00933">
    <property type="entry name" value="FGGY_KINASES_1"/>
    <property type="match status" value="1"/>
</dbReference>
<dbReference type="PROSITE" id="PS00445">
    <property type="entry name" value="FGGY_KINASES_2"/>
    <property type="match status" value="1"/>
</dbReference>
<feature type="chain" id="PRO_1000098715" description="Glycerol kinase">
    <location>
        <begin position="1"/>
        <end position="496"/>
    </location>
</feature>
<feature type="binding site" evidence="1">
    <location>
        <position position="12"/>
    </location>
    <ligand>
        <name>ADP</name>
        <dbReference type="ChEBI" id="CHEBI:456216"/>
    </ligand>
</feature>
<feature type="binding site" evidence="1">
    <location>
        <position position="12"/>
    </location>
    <ligand>
        <name>ATP</name>
        <dbReference type="ChEBI" id="CHEBI:30616"/>
    </ligand>
</feature>
<feature type="binding site" evidence="1">
    <location>
        <position position="12"/>
    </location>
    <ligand>
        <name>sn-glycerol 3-phosphate</name>
        <dbReference type="ChEBI" id="CHEBI:57597"/>
    </ligand>
</feature>
<feature type="binding site" evidence="1">
    <location>
        <position position="13"/>
    </location>
    <ligand>
        <name>ATP</name>
        <dbReference type="ChEBI" id="CHEBI:30616"/>
    </ligand>
</feature>
<feature type="binding site" evidence="1">
    <location>
        <position position="14"/>
    </location>
    <ligand>
        <name>ATP</name>
        <dbReference type="ChEBI" id="CHEBI:30616"/>
    </ligand>
</feature>
<feature type="binding site" evidence="1">
    <location>
        <position position="16"/>
    </location>
    <ligand>
        <name>ADP</name>
        <dbReference type="ChEBI" id="CHEBI:456216"/>
    </ligand>
</feature>
<feature type="binding site" evidence="1">
    <location>
        <position position="82"/>
    </location>
    <ligand>
        <name>glycerol</name>
        <dbReference type="ChEBI" id="CHEBI:17754"/>
    </ligand>
</feature>
<feature type="binding site" evidence="1">
    <location>
        <position position="82"/>
    </location>
    <ligand>
        <name>sn-glycerol 3-phosphate</name>
        <dbReference type="ChEBI" id="CHEBI:57597"/>
    </ligand>
</feature>
<feature type="binding site" evidence="1">
    <location>
        <position position="83"/>
    </location>
    <ligand>
        <name>glycerol</name>
        <dbReference type="ChEBI" id="CHEBI:17754"/>
    </ligand>
</feature>
<feature type="binding site" evidence="1">
    <location>
        <position position="83"/>
    </location>
    <ligand>
        <name>sn-glycerol 3-phosphate</name>
        <dbReference type="ChEBI" id="CHEBI:57597"/>
    </ligand>
</feature>
<feature type="binding site" evidence="1">
    <location>
        <position position="134"/>
    </location>
    <ligand>
        <name>glycerol</name>
        <dbReference type="ChEBI" id="CHEBI:17754"/>
    </ligand>
</feature>
<feature type="binding site" evidence="1">
    <location>
        <position position="134"/>
    </location>
    <ligand>
        <name>sn-glycerol 3-phosphate</name>
        <dbReference type="ChEBI" id="CHEBI:57597"/>
    </ligand>
</feature>
<feature type="binding site" evidence="1">
    <location>
        <position position="244"/>
    </location>
    <ligand>
        <name>glycerol</name>
        <dbReference type="ChEBI" id="CHEBI:17754"/>
    </ligand>
</feature>
<feature type="binding site" evidence="1">
    <location>
        <position position="244"/>
    </location>
    <ligand>
        <name>sn-glycerol 3-phosphate</name>
        <dbReference type="ChEBI" id="CHEBI:57597"/>
    </ligand>
</feature>
<feature type="binding site" evidence="1">
    <location>
        <position position="245"/>
    </location>
    <ligand>
        <name>glycerol</name>
        <dbReference type="ChEBI" id="CHEBI:17754"/>
    </ligand>
</feature>
<feature type="binding site" evidence="1">
    <location>
        <position position="266"/>
    </location>
    <ligand>
        <name>ADP</name>
        <dbReference type="ChEBI" id="CHEBI:456216"/>
    </ligand>
</feature>
<feature type="binding site" evidence="1">
    <location>
        <position position="266"/>
    </location>
    <ligand>
        <name>ATP</name>
        <dbReference type="ChEBI" id="CHEBI:30616"/>
    </ligand>
</feature>
<feature type="binding site" evidence="1">
    <location>
        <position position="309"/>
    </location>
    <ligand>
        <name>ADP</name>
        <dbReference type="ChEBI" id="CHEBI:456216"/>
    </ligand>
</feature>
<feature type="binding site" evidence="1">
    <location>
        <position position="309"/>
    </location>
    <ligand>
        <name>ATP</name>
        <dbReference type="ChEBI" id="CHEBI:30616"/>
    </ligand>
</feature>
<feature type="binding site" evidence="1">
    <location>
        <position position="313"/>
    </location>
    <ligand>
        <name>ATP</name>
        <dbReference type="ChEBI" id="CHEBI:30616"/>
    </ligand>
</feature>
<feature type="binding site" evidence="1">
    <location>
        <position position="410"/>
    </location>
    <ligand>
        <name>ADP</name>
        <dbReference type="ChEBI" id="CHEBI:456216"/>
    </ligand>
</feature>
<feature type="binding site" evidence="1">
    <location>
        <position position="410"/>
    </location>
    <ligand>
        <name>ATP</name>
        <dbReference type="ChEBI" id="CHEBI:30616"/>
    </ligand>
</feature>
<feature type="binding site" evidence="1">
    <location>
        <position position="414"/>
    </location>
    <ligand>
        <name>ADP</name>
        <dbReference type="ChEBI" id="CHEBI:456216"/>
    </ligand>
</feature>
<feature type="modified residue" description="Phosphohistidine; by HPr" evidence="1">
    <location>
        <position position="230"/>
    </location>
</feature>
<name>GLPK_BACMK</name>
<gene>
    <name evidence="1" type="primary">glpK</name>
    <name type="ordered locus">BcerKBAB4_0948</name>
</gene>
<organism>
    <name type="scientific">Bacillus mycoides (strain KBAB4)</name>
    <name type="common">Bacillus weihenstephanensis</name>
    <dbReference type="NCBI Taxonomy" id="315730"/>
    <lineage>
        <taxon>Bacteria</taxon>
        <taxon>Bacillati</taxon>
        <taxon>Bacillota</taxon>
        <taxon>Bacilli</taxon>
        <taxon>Bacillales</taxon>
        <taxon>Bacillaceae</taxon>
        <taxon>Bacillus</taxon>
        <taxon>Bacillus cereus group</taxon>
    </lineage>
</organism>